<sequence>MSAAARVVAPVMMLSRFRGALVGSVLGDCIGGEFEGAVDVPLDRVLQHLSALEDDTRGDGILQYSDDTAMMRCVADSLLTRMTFDERDMAQRFAKEYSHSPGRGYGSGVVQVLRKLASPHLKDVFQPAQAQFGGRGSFGNGGAMRAVPFALAFRSRADVRKYSRFGAMLTHSCSLGYNGAALQALAVHLSLQGALALPKDFIDKLISEMEELEKDETAKHDAKALNLSEFPYCSRLHRVKELMDKTSVSIEEVISELGNGIAALQSVPTAIFCVLYCLEPQDGLPERFGGLERTIAYSLALGGDTDTIACMAGAIAGAHYGIDSIPLSWQVSCEGVDEADDLARRLYDLYCLPQHNEDRGNNQPHTTNTD</sequence>
<name>ADPRS_DANRE</name>
<protein>
    <recommendedName>
        <fullName evidence="3">ADP-ribosylhydrolase ARH3</fullName>
    </recommendedName>
    <alternativeName>
        <fullName evidence="3">ADP-ribose glycohydrolase ARH3</fullName>
    </alternativeName>
    <alternativeName>
        <fullName evidence="1">ADP-ribosylhydrolase 3</fullName>
    </alternativeName>
    <alternativeName>
        <fullName evidence="3">O-acetyl-ADP-ribose deacetylase ARH3</fullName>
        <ecNumber evidence="1">3.5.1.-</ecNumber>
    </alternativeName>
    <alternativeName>
        <fullName evidence="3">Poly(ADP-ribose) glycohydrolase ARH3</fullName>
        <ecNumber evidence="1">3.2.1.143</ecNumber>
    </alternativeName>
    <alternativeName>
        <fullName evidence="3">[Protein ADP-ribosylarginine] hydrolase-like protein 2</fullName>
    </alternativeName>
    <alternativeName>
        <fullName>[Protein ADP-ribosylserine] hydrolase</fullName>
        <ecNumber>3.2.2.-</ecNumber>
    </alternativeName>
</protein>
<proteinExistence type="evidence at transcript level"/>
<gene>
    <name type="primary">adprs</name>
    <name evidence="1" type="synonym">adprhl2</name>
    <name evidence="1" type="synonym">arh3</name>
    <name evidence="2" type="ORF">zgc:92867</name>
</gene>
<feature type="chain" id="PRO_0000277616" description="ADP-ribosylhydrolase ARH3">
    <location>
        <begin position="1"/>
        <end position="370"/>
    </location>
</feature>
<feature type="binding site" evidence="1">
    <location>
        <position position="35"/>
    </location>
    <ligand>
        <name>Mg(2+)</name>
        <dbReference type="ChEBI" id="CHEBI:18420"/>
        <label>2</label>
    </ligand>
</feature>
<feature type="binding site" evidence="1">
    <location>
        <position position="66"/>
    </location>
    <ligand>
        <name>Mg(2+)</name>
        <dbReference type="ChEBI" id="CHEBI:18420"/>
        <label>1</label>
    </ligand>
</feature>
<feature type="binding site" evidence="1">
    <location>
        <position position="66"/>
    </location>
    <ligand>
        <name>substrate</name>
    </ligand>
</feature>
<feature type="binding site" evidence="1">
    <location>
        <position position="67"/>
    </location>
    <ligand>
        <name>Mg(2+)</name>
        <dbReference type="ChEBI" id="CHEBI:18420"/>
        <label>1</label>
    </ligand>
</feature>
<feature type="binding site" evidence="1">
    <location>
        <begin position="135"/>
        <end position="141"/>
    </location>
    <ligand>
        <name>substrate</name>
    </ligand>
</feature>
<feature type="binding site" evidence="1">
    <location>
        <position position="171"/>
    </location>
    <ligand>
        <name>substrate</name>
    </ligand>
</feature>
<feature type="binding site" evidence="1">
    <location>
        <position position="225"/>
    </location>
    <ligand>
        <name>substrate</name>
    </ligand>
</feature>
<feature type="binding site" evidence="1">
    <location>
        <position position="261"/>
    </location>
    <ligand>
        <name>substrate</name>
    </ligand>
</feature>
<feature type="binding site" evidence="1">
    <location>
        <position position="304"/>
    </location>
    <ligand>
        <name>Mg(2+)</name>
        <dbReference type="ChEBI" id="CHEBI:18420"/>
        <label>2</label>
    </ligand>
</feature>
<feature type="binding site" evidence="1">
    <location>
        <position position="306"/>
    </location>
    <ligand>
        <name>Mg(2+)</name>
        <dbReference type="ChEBI" id="CHEBI:18420"/>
        <label>1</label>
    </ligand>
</feature>
<feature type="binding site" evidence="1">
    <location>
        <position position="306"/>
    </location>
    <ligand>
        <name>Mg(2+)</name>
        <dbReference type="ChEBI" id="CHEBI:18420"/>
        <label>2</label>
    </ligand>
</feature>
<feature type="binding site" evidence="1">
    <location>
        <position position="307"/>
    </location>
    <ligand>
        <name>Mg(2+)</name>
        <dbReference type="ChEBI" id="CHEBI:18420"/>
        <label>2</label>
    </ligand>
</feature>
<feature type="site" description="Glutamate flap" evidence="1">
    <location>
        <position position="35"/>
    </location>
</feature>
<feature type="sequence conflict" description="In Ref. 1; AAI52162." evidence="3" ref="1">
    <original>R</original>
    <variation>H</variation>
    <location>
        <position position="345"/>
    </location>
</feature>
<keyword id="KW-0158">Chromosome</keyword>
<keyword id="KW-0963">Cytoplasm</keyword>
<keyword id="KW-0227">DNA damage</keyword>
<keyword id="KW-0234">DNA repair</keyword>
<keyword id="KW-0378">Hydrolase</keyword>
<keyword id="KW-0460">Magnesium</keyword>
<keyword id="KW-0479">Metal-binding</keyword>
<keyword id="KW-0496">Mitochondrion</keyword>
<keyword id="KW-0539">Nucleus</keyword>
<keyword id="KW-1185">Reference proteome</keyword>
<reference key="1">
    <citation type="submission" date="2004-09" db="EMBL/GenBank/DDBJ databases">
        <authorList>
            <consortium name="NIH - Zebrafish Gene Collection (ZGC) project"/>
        </authorList>
    </citation>
    <scope>NUCLEOTIDE SEQUENCE [LARGE SCALE MRNA]</scope>
    <source>
        <tissue>Brain</tissue>
        <tissue>Ovary</tissue>
    </source>
</reference>
<organism>
    <name type="scientific">Danio rerio</name>
    <name type="common">Zebrafish</name>
    <name type="synonym">Brachydanio rerio</name>
    <dbReference type="NCBI Taxonomy" id="7955"/>
    <lineage>
        <taxon>Eukaryota</taxon>
        <taxon>Metazoa</taxon>
        <taxon>Chordata</taxon>
        <taxon>Craniata</taxon>
        <taxon>Vertebrata</taxon>
        <taxon>Euteleostomi</taxon>
        <taxon>Actinopterygii</taxon>
        <taxon>Neopterygii</taxon>
        <taxon>Teleostei</taxon>
        <taxon>Ostariophysi</taxon>
        <taxon>Cypriniformes</taxon>
        <taxon>Danionidae</taxon>
        <taxon>Danioninae</taxon>
        <taxon>Danio</taxon>
    </lineage>
</organism>
<accession>Q66HT8</accession>
<accession>A7MCF6</accession>
<dbReference type="EC" id="3.5.1.-" evidence="1"/>
<dbReference type="EC" id="3.2.1.143" evidence="1"/>
<dbReference type="EC" id="3.2.2.-"/>
<dbReference type="EMBL" id="BC081683">
    <property type="protein sequence ID" value="AAH81683.1"/>
    <property type="status" value="ALT_SEQ"/>
    <property type="molecule type" value="mRNA"/>
</dbReference>
<dbReference type="EMBL" id="BC152161">
    <property type="protein sequence ID" value="AAI52162.1"/>
    <property type="molecule type" value="mRNA"/>
</dbReference>
<dbReference type="RefSeq" id="NP_001004565.2">
    <property type="nucleotide sequence ID" value="NM_001004565.2"/>
</dbReference>
<dbReference type="SMR" id="Q66HT8"/>
<dbReference type="FunCoup" id="Q66HT8">
    <property type="interactions" value="628"/>
</dbReference>
<dbReference type="STRING" id="7955.ENSDARP00000027022"/>
<dbReference type="PaxDb" id="7955-ENSDARP00000027022"/>
<dbReference type="Ensembl" id="ENSDART00000011706">
    <property type="protein sequence ID" value="ENSDARP00000027022"/>
    <property type="gene ID" value="ENSDARG00000019338"/>
</dbReference>
<dbReference type="Ensembl" id="ENSDART00000181081">
    <property type="protein sequence ID" value="ENSDARP00000157106"/>
    <property type="gene ID" value="ENSDARG00000110712"/>
</dbReference>
<dbReference type="GeneID" id="796446"/>
<dbReference type="KEGG" id="dre:796446"/>
<dbReference type="AGR" id="ZFIN:ZDB-GENE-040912-85"/>
<dbReference type="CTD" id="54936"/>
<dbReference type="ZFIN" id="ZDB-GENE-040912-85">
    <property type="gene designation" value="adprs"/>
</dbReference>
<dbReference type="eggNOG" id="ENOG502QUER">
    <property type="taxonomic scope" value="Eukaryota"/>
</dbReference>
<dbReference type="HOGENOM" id="CLU_024566_6_0_1"/>
<dbReference type="InParanoid" id="Q66HT8"/>
<dbReference type="OMA" id="HMEHVEA"/>
<dbReference type="OrthoDB" id="410104at2759"/>
<dbReference type="PhylomeDB" id="Q66HT8"/>
<dbReference type="TreeFam" id="TF324754"/>
<dbReference type="Reactome" id="R-DRE-110362">
    <property type="pathway name" value="POLB-Dependent Long Patch Base Excision Repair"/>
</dbReference>
<dbReference type="PRO" id="PR:Q66HT8"/>
<dbReference type="Proteomes" id="UP000000437">
    <property type="component" value="Alternate scaffold 17"/>
</dbReference>
<dbReference type="Proteomes" id="UP000000437">
    <property type="component" value="Chromosome 17"/>
</dbReference>
<dbReference type="Bgee" id="ENSDARG00000019338">
    <property type="expression patterns" value="Expressed in testis and 23 other cell types or tissues"/>
</dbReference>
<dbReference type="GO" id="GO:0005759">
    <property type="term" value="C:mitochondrial matrix"/>
    <property type="evidence" value="ECO:0007669"/>
    <property type="project" value="UniProtKB-SubCell"/>
</dbReference>
<dbReference type="GO" id="GO:0005739">
    <property type="term" value="C:mitochondrion"/>
    <property type="evidence" value="ECO:0000318"/>
    <property type="project" value="GO_Central"/>
</dbReference>
<dbReference type="GO" id="GO:0005634">
    <property type="term" value="C:nucleus"/>
    <property type="evidence" value="ECO:0000250"/>
    <property type="project" value="UniProtKB"/>
</dbReference>
<dbReference type="GO" id="GO:0090734">
    <property type="term" value="C:site of DNA damage"/>
    <property type="evidence" value="ECO:0000250"/>
    <property type="project" value="UniProtKB"/>
</dbReference>
<dbReference type="GO" id="GO:0140292">
    <property type="term" value="F:ADP-ribosylserine hydrolase activity"/>
    <property type="evidence" value="ECO:0000250"/>
    <property type="project" value="UniProtKB"/>
</dbReference>
<dbReference type="GO" id="GO:0004553">
    <property type="term" value="F:hydrolase activity, hydrolyzing O-glycosyl compounds"/>
    <property type="evidence" value="ECO:0000250"/>
    <property type="project" value="UniProtKB"/>
</dbReference>
<dbReference type="GO" id="GO:0000287">
    <property type="term" value="F:magnesium ion binding"/>
    <property type="evidence" value="ECO:0000250"/>
    <property type="project" value="UniProtKB"/>
</dbReference>
<dbReference type="GO" id="GO:0061463">
    <property type="term" value="F:O-acetyl-ADP-ribose deacetylase activity"/>
    <property type="evidence" value="ECO:0000250"/>
    <property type="project" value="UniProtKB"/>
</dbReference>
<dbReference type="GO" id="GO:0004649">
    <property type="term" value="F:poly(ADP-ribose) glycohydrolase activity"/>
    <property type="evidence" value="ECO:0000250"/>
    <property type="project" value="UniProtKB"/>
</dbReference>
<dbReference type="GO" id="GO:0006281">
    <property type="term" value="P:DNA repair"/>
    <property type="evidence" value="ECO:0000250"/>
    <property type="project" value="UniProtKB"/>
</dbReference>
<dbReference type="GO" id="GO:0060546">
    <property type="term" value="P:negative regulation of necroptotic process"/>
    <property type="evidence" value="ECO:0000250"/>
    <property type="project" value="UniProtKB"/>
</dbReference>
<dbReference type="GO" id="GO:0140290">
    <property type="term" value="P:peptidyl-serine ADP-deribosylation"/>
    <property type="evidence" value="ECO:0000250"/>
    <property type="project" value="UniProtKB"/>
</dbReference>
<dbReference type="FunFam" id="1.10.4080.10:FF:000001">
    <property type="entry name" value="ADP-ribose glycohydrolase ARH3"/>
    <property type="match status" value="1"/>
</dbReference>
<dbReference type="Gene3D" id="1.10.4080.10">
    <property type="entry name" value="ADP-ribosylation/Crystallin J1"/>
    <property type="match status" value="1"/>
</dbReference>
<dbReference type="InterPro" id="IPR050792">
    <property type="entry name" value="ADP-ribosylglycohydrolase"/>
</dbReference>
<dbReference type="InterPro" id="IPR005502">
    <property type="entry name" value="Ribosyl_crysJ1"/>
</dbReference>
<dbReference type="InterPro" id="IPR036705">
    <property type="entry name" value="Ribosyl_crysJ1_sf"/>
</dbReference>
<dbReference type="PANTHER" id="PTHR16222">
    <property type="entry name" value="ADP-RIBOSYLGLYCOHYDROLASE"/>
    <property type="match status" value="1"/>
</dbReference>
<dbReference type="PANTHER" id="PTHR16222:SF24">
    <property type="entry name" value="ADP-RIBOSYLHYDROLASE ARH3"/>
    <property type="match status" value="1"/>
</dbReference>
<dbReference type="Pfam" id="PF03747">
    <property type="entry name" value="ADP_ribosyl_GH"/>
    <property type="match status" value="1"/>
</dbReference>
<dbReference type="SUPFAM" id="SSF101478">
    <property type="entry name" value="ADP-ribosylglycohydrolase"/>
    <property type="match status" value="1"/>
</dbReference>
<evidence type="ECO:0000250" key="1">
    <source>
        <dbReference type="UniProtKB" id="Q9NX46"/>
    </source>
</evidence>
<evidence type="ECO:0000303" key="2">
    <source ref="1"/>
</evidence>
<evidence type="ECO:0000305" key="3"/>
<comment type="function">
    <text evidence="1">ADP-ribosylhydrolase that preferentially hydrolyzes the scissile alpha-O-linkage attached to the anomeric C1'' position of ADP-ribose and acts on different substrates, such as proteins ADP-ribosylated on serine and threonine, free poly(ADP-ribose) and O-acetyl-ADP-D-ribose. Specifically acts as a serine mono-ADP-ribosylhydrolase by mediating the removal of mono-ADP-ribose attached to serine residues on proteins, thereby playing a key role in DNA damage response. Serine ADP-ribosylation of proteins constitutes the primary form of ADP-ribosylation of proteins in response to DNA damage. Does not hydrolyze ADP-ribosyl-arginine, -cysteine, -diphthamide, or -asparagine bonds. Also able to degrade protein free poly(ADP-ribose), which is synthesized in response to DNA damage: free poly(ADP-ribose) acts as a potent cell death signal and its degradation by ADPRHL2 protects cells from poly(ADP-ribose)-dependent cell death, a process named parthanatos (By similarity). Also hydrolyzes free poly(ADP-ribose) in mitochondria. Specifically digests O-acetyl-ADP-D-ribose, a product of deacetylation reactions catalyzed by sirtuins. Specifically degrades 1''-O-acetyl-ADP-D-ribose isomer, rather than 2''-O-acetyl-ADP-D-ribose or 3''-O-acetyl-ADP-D-ribose isomers.</text>
</comment>
<comment type="catalytic activity">
    <reaction evidence="1">
        <text>[(1''-&gt;2')-ADP-alpha-D-ribose](n) + H2O = [(1''-&gt;2')-ADP-alpha-D-ribose](n-1) + ADP-D-ribose</text>
        <dbReference type="Rhea" id="RHEA:52216"/>
        <dbReference type="Rhea" id="RHEA-COMP:16922"/>
        <dbReference type="Rhea" id="RHEA-COMP:16923"/>
        <dbReference type="ChEBI" id="CHEBI:15377"/>
        <dbReference type="ChEBI" id="CHEBI:57967"/>
        <dbReference type="ChEBI" id="CHEBI:142512"/>
        <dbReference type="EC" id="3.2.1.143"/>
    </reaction>
</comment>
<comment type="catalytic activity">
    <reaction evidence="1">
        <text>1''-O-acetyl-ADP-alpha-D-ribose + H2O = ADP-D-ribose + acetate + H(+)</text>
        <dbReference type="Rhea" id="RHEA:58112"/>
        <dbReference type="ChEBI" id="CHEBI:15377"/>
        <dbReference type="ChEBI" id="CHEBI:15378"/>
        <dbReference type="ChEBI" id="CHEBI:30089"/>
        <dbReference type="ChEBI" id="CHEBI:57967"/>
        <dbReference type="ChEBI" id="CHEBI:142511"/>
    </reaction>
</comment>
<comment type="catalytic activity">
    <reaction evidence="1">
        <text>O-(ADP-D-ribosyl)-L-seryl-[protein] + H2O = ADP-D-ribose + L-seryl-[protein]</text>
        <dbReference type="Rhea" id="RHEA:58256"/>
        <dbReference type="Rhea" id="RHEA-COMP:9863"/>
        <dbReference type="Rhea" id="RHEA-COMP:15091"/>
        <dbReference type="ChEBI" id="CHEBI:15377"/>
        <dbReference type="ChEBI" id="CHEBI:29999"/>
        <dbReference type="ChEBI" id="CHEBI:57967"/>
        <dbReference type="ChEBI" id="CHEBI:142556"/>
    </reaction>
</comment>
<comment type="catalytic activity">
    <reaction evidence="1">
        <text>alpha-NAD(+) + H2O = ADP-D-ribose + nicotinamide + H(+)</text>
        <dbReference type="Rhea" id="RHEA:68792"/>
        <dbReference type="ChEBI" id="CHEBI:15377"/>
        <dbReference type="ChEBI" id="CHEBI:15378"/>
        <dbReference type="ChEBI" id="CHEBI:17154"/>
        <dbReference type="ChEBI" id="CHEBI:57967"/>
        <dbReference type="ChEBI" id="CHEBI:77017"/>
    </reaction>
</comment>
<comment type="cofactor">
    <cofactor evidence="1">
        <name>Mg(2+)</name>
        <dbReference type="ChEBI" id="CHEBI:18420"/>
    </cofactor>
    <text evidence="1">Binds 2 magnesium ions per subunit.</text>
</comment>
<comment type="activity regulation">
    <text evidence="1">The protein undergoes a dramatic conformational switch from closed to open states upon substrate-binding, which enables specific substrate recognition for the 1''-O-linkage. The glutamate flap (Glu-35) blocks substrate entrance to Mg(2+) in the unliganded closed state. In presence of substrate, Glu-35 is ejected from the active site: this closed-to-open transition significantly widens the substrate-binding channel and precisely positions the scissile 1''-O-linkage for cleavage while securing tightly 2'- and 3'-hydroxyls of ADP-ribose.</text>
</comment>
<comment type="subunit">
    <text evidence="1">Monomer.</text>
</comment>
<comment type="subcellular location">
    <subcellularLocation>
        <location evidence="1">Nucleus</location>
    </subcellularLocation>
    <subcellularLocation>
        <location evidence="1">Cytoplasm</location>
    </subcellularLocation>
    <subcellularLocation>
        <location evidence="1">Chromosome</location>
    </subcellularLocation>
    <subcellularLocation>
        <location evidence="1">Mitochondrion matrix</location>
    </subcellularLocation>
    <text evidence="1">Recruited to DNA lesion regions following DNA damage; ADP-D-ribose-recognition is required for recruitment to DNA damage sites.</text>
</comment>
<comment type="similarity">
    <text evidence="3">Belongs to the ADP-ribosylglycohydrolase family.</text>
</comment>
<comment type="sequence caution" evidence="3">
    <conflict type="miscellaneous discrepancy">
        <sequence resource="EMBL-CDS" id="AAH81683"/>
    </conflict>
    <text>Unlikely isoform. Aberrant splice sites.</text>
</comment>